<organism>
    <name type="scientific">Mus musculus</name>
    <name type="common">Mouse</name>
    <dbReference type="NCBI Taxonomy" id="10090"/>
    <lineage>
        <taxon>Eukaryota</taxon>
        <taxon>Metazoa</taxon>
        <taxon>Chordata</taxon>
        <taxon>Craniata</taxon>
        <taxon>Vertebrata</taxon>
        <taxon>Euteleostomi</taxon>
        <taxon>Mammalia</taxon>
        <taxon>Eutheria</taxon>
        <taxon>Euarchontoglires</taxon>
        <taxon>Glires</taxon>
        <taxon>Rodentia</taxon>
        <taxon>Myomorpha</taxon>
        <taxon>Muroidea</taxon>
        <taxon>Muridae</taxon>
        <taxon>Murinae</taxon>
        <taxon>Mus</taxon>
        <taxon>Mus</taxon>
    </lineage>
</organism>
<dbReference type="EC" id="1.13.11.-" evidence="3"/>
<dbReference type="EC" id="1.13.11.31" evidence="7 10"/>
<dbReference type="EC" id="1.13.11.33" evidence="3"/>
<dbReference type="EC" id="3.3.2.-"/>
<dbReference type="EMBL" id="U04334">
    <property type="protein sequence ID" value="AAA20659.1"/>
    <property type="molecule type" value="mRNA"/>
</dbReference>
<dbReference type="EMBL" id="S80446">
    <property type="protein sequence ID" value="AAB36013.1"/>
    <property type="molecule type" value="mRNA"/>
</dbReference>
<dbReference type="EMBL" id="AK036898">
    <property type="protein sequence ID" value="BAC29629.1"/>
    <property type="molecule type" value="mRNA"/>
</dbReference>
<dbReference type="EMBL" id="AK087724">
    <property type="protein sequence ID" value="BAC39981.1"/>
    <property type="molecule type" value="mRNA"/>
</dbReference>
<dbReference type="EMBL" id="AL669869">
    <property type="status" value="NOT_ANNOTATED_CDS"/>
    <property type="molecule type" value="Genomic_DNA"/>
</dbReference>
<dbReference type="EMBL" id="S77511">
    <property type="protein sequence ID" value="AAB34667.1"/>
    <property type="molecule type" value="mRNA"/>
</dbReference>
<dbReference type="CCDS" id="CCDS24942.1"/>
<dbReference type="PIR" id="A54075">
    <property type="entry name" value="A54075"/>
</dbReference>
<dbReference type="RefSeq" id="NP_001318047.1">
    <property type="nucleotide sequence ID" value="NM_001331118.1"/>
</dbReference>
<dbReference type="RefSeq" id="NP_031466.2">
    <property type="nucleotide sequence ID" value="NM_007440.5"/>
</dbReference>
<dbReference type="SMR" id="P39655"/>
<dbReference type="FunCoup" id="P39655">
    <property type="interactions" value="316"/>
</dbReference>
<dbReference type="STRING" id="10090.ENSMUSP00000000329"/>
<dbReference type="BindingDB" id="P39655"/>
<dbReference type="ChEMBL" id="CHEMBL3225"/>
<dbReference type="SwissLipids" id="SLP:000000684"/>
<dbReference type="iPTMnet" id="P39655"/>
<dbReference type="PhosphoSitePlus" id="P39655"/>
<dbReference type="PaxDb" id="10090-ENSMUSP00000000329"/>
<dbReference type="ProteomicsDB" id="290139"/>
<dbReference type="Antibodypedia" id="2760">
    <property type="antibodies" value="236 antibodies from 28 providers"/>
</dbReference>
<dbReference type="DNASU" id="11684"/>
<dbReference type="Ensembl" id="ENSMUST00000000329.9">
    <property type="protein sequence ID" value="ENSMUSP00000000329.3"/>
    <property type="gene ID" value="ENSMUSG00000000320.11"/>
</dbReference>
<dbReference type="GeneID" id="11684"/>
<dbReference type="KEGG" id="mmu:11684"/>
<dbReference type="UCSC" id="uc007juj.1">
    <property type="organism name" value="mouse"/>
</dbReference>
<dbReference type="AGR" id="MGI:87998"/>
<dbReference type="CTD" id="239"/>
<dbReference type="MGI" id="MGI:87998">
    <property type="gene designation" value="Alox12"/>
</dbReference>
<dbReference type="VEuPathDB" id="HostDB:ENSMUSG00000000320"/>
<dbReference type="eggNOG" id="ENOG502QQSP">
    <property type="taxonomic scope" value="Eukaryota"/>
</dbReference>
<dbReference type="GeneTree" id="ENSGT00940000155191"/>
<dbReference type="HOGENOM" id="CLU_004282_3_3_1"/>
<dbReference type="InParanoid" id="P39655"/>
<dbReference type="OMA" id="NNGQYDW"/>
<dbReference type="OrthoDB" id="407298at2759"/>
<dbReference type="PhylomeDB" id="P39655"/>
<dbReference type="TreeFam" id="TF105320"/>
<dbReference type="Reactome" id="R-MMU-2142696">
    <property type="pathway name" value="Synthesis of Hepoxilins (HX) and Trioxilins (TrX)"/>
</dbReference>
<dbReference type="Reactome" id="R-MMU-2142700">
    <property type="pathway name" value="Biosynthesis of Lipoxins (LX)"/>
</dbReference>
<dbReference type="Reactome" id="R-MMU-2142712">
    <property type="pathway name" value="Synthesis of 12-eicosatetraenoic acid derivatives"/>
</dbReference>
<dbReference type="Reactome" id="R-MMU-9018677">
    <property type="pathway name" value="Biosynthesis of DHA-derived SPMs"/>
</dbReference>
<dbReference type="Reactome" id="R-MMU-9025106">
    <property type="pathway name" value="Biosynthesis of DPAn-6 SPMs"/>
</dbReference>
<dbReference type="Reactome" id="R-MMU-9026290">
    <property type="pathway name" value="Biosynthesis of DPAn-3-derived maresins"/>
</dbReference>
<dbReference type="UniPathway" id="UPA00881"/>
<dbReference type="BioGRID-ORCS" id="11684">
    <property type="hits" value="7 hits in 78 CRISPR screens"/>
</dbReference>
<dbReference type="PRO" id="PR:P39655"/>
<dbReference type="Proteomes" id="UP000000589">
    <property type="component" value="Chromosome 11"/>
</dbReference>
<dbReference type="RNAct" id="P39655">
    <property type="molecule type" value="protein"/>
</dbReference>
<dbReference type="Bgee" id="ENSMUSG00000000320">
    <property type="expression patterns" value="Expressed in blood and 139 other cell types or tissues"/>
</dbReference>
<dbReference type="ExpressionAtlas" id="P39655">
    <property type="expression patterns" value="baseline and differential"/>
</dbReference>
<dbReference type="GO" id="GO:0005737">
    <property type="term" value="C:cytoplasm"/>
    <property type="evidence" value="ECO:0000314"/>
    <property type="project" value="UniProtKB"/>
</dbReference>
<dbReference type="GO" id="GO:0005829">
    <property type="term" value="C:cytosol"/>
    <property type="evidence" value="ECO:0007669"/>
    <property type="project" value="UniProtKB-SubCell"/>
</dbReference>
<dbReference type="GO" id="GO:0016020">
    <property type="term" value="C:membrane"/>
    <property type="evidence" value="ECO:0000250"/>
    <property type="project" value="UniProtKB"/>
</dbReference>
<dbReference type="GO" id="GO:0042383">
    <property type="term" value="C:sarcolemma"/>
    <property type="evidence" value="ECO:0000250"/>
    <property type="project" value="UniProtKB"/>
</dbReference>
<dbReference type="GO" id="GO:0004052">
    <property type="term" value="F:arachidonate 12(S)-lipoxygenase activity"/>
    <property type="evidence" value="ECO:0000314"/>
    <property type="project" value="UniProtKB"/>
</dbReference>
<dbReference type="GO" id="GO:0050473">
    <property type="term" value="F:arachidonate 15-lipoxygenase activity"/>
    <property type="evidence" value="ECO:0000250"/>
    <property type="project" value="UniProtKB"/>
</dbReference>
<dbReference type="GO" id="GO:0047977">
    <property type="term" value="F:hepoxilin-epoxide hydrolase activity"/>
    <property type="evidence" value="ECO:0000250"/>
    <property type="project" value="UniProtKB"/>
</dbReference>
<dbReference type="GO" id="GO:0005506">
    <property type="term" value="F:iron ion binding"/>
    <property type="evidence" value="ECO:0007669"/>
    <property type="project" value="InterPro"/>
</dbReference>
<dbReference type="GO" id="GO:0016165">
    <property type="term" value="F:linoleate 13S-lipoxygenase activity"/>
    <property type="evidence" value="ECO:0000315"/>
    <property type="project" value="UniProtKB"/>
</dbReference>
<dbReference type="GO" id="GO:0019369">
    <property type="term" value="P:arachidonate metabolic process"/>
    <property type="evidence" value="ECO:0000314"/>
    <property type="project" value="UniProtKB"/>
</dbReference>
<dbReference type="GO" id="GO:0071396">
    <property type="term" value="P:cellular response to lipid"/>
    <property type="evidence" value="ECO:0007669"/>
    <property type="project" value="Ensembl"/>
</dbReference>
<dbReference type="GO" id="GO:0061436">
    <property type="term" value="P:establishment of skin barrier"/>
    <property type="evidence" value="ECO:0000315"/>
    <property type="project" value="UniProtKB"/>
</dbReference>
<dbReference type="GO" id="GO:0019395">
    <property type="term" value="P:fatty acid oxidation"/>
    <property type="evidence" value="ECO:0000314"/>
    <property type="project" value="UniProtKB"/>
</dbReference>
<dbReference type="GO" id="GO:0051122">
    <property type="term" value="P:hepoxilin biosynthetic process"/>
    <property type="evidence" value="ECO:0000250"/>
    <property type="project" value="UniProtKB"/>
</dbReference>
<dbReference type="GO" id="GO:1901751">
    <property type="term" value="P:leukotriene A4 metabolic process"/>
    <property type="evidence" value="ECO:0000250"/>
    <property type="project" value="UniProtKB"/>
</dbReference>
<dbReference type="GO" id="GO:0043651">
    <property type="term" value="P:linoleic acid metabolic process"/>
    <property type="evidence" value="ECO:0000250"/>
    <property type="project" value="UniProtKB"/>
</dbReference>
<dbReference type="GO" id="GO:0006629">
    <property type="term" value="P:lipid metabolic process"/>
    <property type="evidence" value="ECO:0000250"/>
    <property type="project" value="UniProtKB"/>
</dbReference>
<dbReference type="GO" id="GO:2001303">
    <property type="term" value="P:lipoxin A4 biosynthetic process"/>
    <property type="evidence" value="ECO:0000250"/>
    <property type="project" value="UniProtKB"/>
</dbReference>
<dbReference type="GO" id="GO:2001306">
    <property type="term" value="P:lipoxin B4 biosynthetic process"/>
    <property type="evidence" value="ECO:0000250"/>
    <property type="project" value="UniProtKB"/>
</dbReference>
<dbReference type="GO" id="GO:0019372">
    <property type="term" value="P:lipoxygenase pathway"/>
    <property type="evidence" value="ECO:0000314"/>
    <property type="project" value="UniProtKB"/>
</dbReference>
<dbReference type="GO" id="GO:0010656">
    <property type="term" value="P:negative regulation of muscle cell apoptotic process"/>
    <property type="evidence" value="ECO:0000250"/>
    <property type="project" value="UniProtKB"/>
</dbReference>
<dbReference type="GO" id="GO:0090331">
    <property type="term" value="P:negative regulation of platelet aggregation"/>
    <property type="evidence" value="ECO:0000315"/>
    <property type="project" value="UniProtKB"/>
</dbReference>
<dbReference type="GO" id="GO:0043065">
    <property type="term" value="P:positive regulation of apoptotic process"/>
    <property type="evidence" value="ECO:0000250"/>
    <property type="project" value="UniProtKB"/>
</dbReference>
<dbReference type="GO" id="GO:2001235">
    <property type="term" value="P:positive regulation of apoptotic signaling pathway"/>
    <property type="evidence" value="ECO:0007669"/>
    <property type="project" value="Ensembl"/>
</dbReference>
<dbReference type="GO" id="GO:0043536">
    <property type="term" value="P:positive regulation of blood vessel endothelial cell migration"/>
    <property type="evidence" value="ECO:0007669"/>
    <property type="project" value="Ensembl"/>
</dbReference>
<dbReference type="GO" id="GO:1905956">
    <property type="term" value="P:positive regulation of endothelial tube morphogenesis"/>
    <property type="evidence" value="ECO:0007669"/>
    <property type="project" value="Ensembl"/>
</dbReference>
<dbReference type="GO" id="GO:0051901">
    <property type="term" value="P:positive regulation of mitochondrial depolarization"/>
    <property type="evidence" value="ECO:0007669"/>
    <property type="project" value="Ensembl"/>
</dbReference>
<dbReference type="GO" id="GO:1903428">
    <property type="term" value="P:positive regulation of reactive oxygen species biosynthetic process"/>
    <property type="evidence" value="ECO:0007669"/>
    <property type="project" value="Ensembl"/>
</dbReference>
<dbReference type="GO" id="GO:0048661">
    <property type="term" value="P:positive regulation of smooth muscle cell proliferation"/>
    <property type="evidence" value="ECO:0007669"/>
    <property type="project" value="Ensembl"/>
</dbReference>
<dbReference type="CDD" id="cd01753">
    <property type="entry name" value="PLAT_LOX"/>
    <property type="match status" value="1"/>
</dbReference>
<dbReference type="FunFam" id="3.10.450.60:FF:000004">
    <property type="entry name" value="Arachidonate 12-lipoxygenase, 12S-type"/>
    <property type="match status" value="1"/>
</dbReference>
<dbReference type="FunFam" id="1.20.245.10:FF:000001">
    <property type="entry name" value="Arachidonate 5-lipoxygenase a"/>
    <property type="match status" value="1"/>
</dbReference>
<dbReference type="FunFam" id="2.60.60.20:FF:000002">
    <property type="entry name" value="Arachidonate 5-lipoxygenase a"/>
    <property type="match status" value="1"/>
</dbReference>
<dbReference type="Gene3D" id="3.10.450.60">
    <property type="match status" value="1"/>
</dbReference>
<dbReference type="Gene3D" id="1.20.245.10">
    <property type="entry name" value="Lipoxygenase-1, Domain 5"/>
    <property type="match status" value="1"/>
</dbReference>
<dbReference type="Gene3D" id="2.60.60.20">
    <property type="entry name" value="PLAT/LH2 domain"/>
    <property type="match status" value="1"/>
</dbReference>
<dbReference type="InterPro" id="IPR000907">
    <property type="entry name" value="LipOase"/>
</dbReference>
<dbReference type="InterPro" id="IPR013819">
    <property type="entry name" value="LipOase_C"/>
</dbReference>
<dbReference type="InterPro" id="IPR036226">
    <property type="entry name" value="LipOase_C_sf"/>
</dbReference>
<dbReference type="InterPro" id="IPR020834">
    <property type="entry name" value="LipOase_CS"/>
</dbReference>
<dbReference type="InterPro" id="IPR020833">
    <property type="entry name" value="LipOase_Fe_BS"/>
</dbReference>
<dbReference type="InterPro" id="IPR001885">
    <property type="entry name" value="LipOase_mml"/>
</dbReference>
<dbReference type="InterPro" id="IPR001024">
    <property type="entry name" value="PLAT/LH2_dom"/>
</dbReference>
<dbReference type="InterPro" id="IPR036392">
    <property type="entry name" value="PLAT/LH2_dom_sf"/>
</dbReference>
<dbReference type="InterPro" id="IPR042062">
    <property type="entry name" value="PLAT_LOX_verte"/>
</dbReference>
<dbReference type="PANTHER" id="PTHR11771">
    <property type="entry name" value="LIPOXYGENASE"/>
    <property type="match status" value="1"/>
</dbReference>
<dbReference type="Pfam" id="PF00305">
    <property type="entry name" value="Lipoxygenase"/>
    <property type="match status" value="1"/>
</dbReference>
<dbReference type="Pfam" id="PF01477">
    <property type="entry name" value="PLAT"/>
    <property type="match status" value="1"/>
</dbReference>
<dbReference type="PRINTS" id="PR00087">
    <property type="entry name" value="LIPOXYGENASE"/>
</dbReference>
<dbReference type="PRINTS" id="PR00467">
    <property type="entry name" value="MAMLPOXGNASE"/>
</dbReference>
<dbReference type="SMART" id="SM00308">
    <property type="entry name" value="LH2"/>
    <property type="match status" value="1"/>
</dbReference>
<dbReference type="SUPFAM" id="SSF49723">
    <property type="entry name" value="Lipase/lipooxygenase domain (PLAT/LH2 domain)"/>
    <property type="match status" value="1"/>
</dbReference>
<dbReference type="SUPFAM" id="SSF48484">
    <property type="entry name" value="Lipoxigenase"/>
    <property type="match status" value="1"/>
</dbReference>
<dbReference type="PROSITE" id="PS00711">
    <property type="entry name" value="LIPOXYGENASE_1"/>
    <property type="match status" value="1"/>
</dbReference>
<dbReference type="PROSITE" id="PS00081">
    <property type="entry name" value="LIPOXYGENASE_2"/>
    <property type="match status" value="1"/>
</dbReference>
<dbReference type="PROSITE" id="PS51393">
    <property type="entry name" value="LIPOXYGENASE_3"/>
    <property type="match status" value="1"/>
</dbReference>
<dbReference type="PROSITE" id="PS50095">
    <property type="entry name" value="PLAT"/>
    <property type="match status" value="1"/>
</dbReference>
<gene>
    <name type="primary">Alox12</name>
    <name type="synonym">Alox12p</name>
</gene>
<name>LOX12_MOUSE</name>
<keyword id="KW-0963">Cytoplasm</keyword>
<keyword id="KW-0223">Dioxygenase</keyword>
<keyword id="KW-0276">Fatty acid metabolism</keyword>
<keyword id="KW-0378">Hydrolase</keyword>
<keyword id="KW-0408">Iron</keyword>
<keyword id="KW-0443">Lipid metabolism</keyword>
<keyword id="KW-0472">Membrane</keyword>
<keyword id="KW-0479">Metal-binding</keyword>
<keyword id="KW-0560">Oxidoreductase</keyword>
<keyword id="KW-0597">Phosphoprotein</keyword>
<keyword id="KW-1185">Reference proteome</keyword>
<comment type="function">
    <text evidence="3 7 8 10 11">Catalyzes the regio and stereo-specific incorporation of molecular oxygen into free and esterified polyunsaturated fatty acids generating lipid hydroperoxides that can be further reduced to the corresponding hydroxy species (PubMed:11256953, PubMed:25293588, PubMed:8188678). Mainly converts arachidonate ((5Z,8Z,11Z,14Z)-eicosatetraenoate) to the specific bioactive lipid (12S)-hydroperoxyeicosatetraenoate/(12S)-HPETE (PubMed:11256953, PubMed:8188678). Through the production of bioactive lipids like (12S)-HPETE it regulates different biological processes including platelet activation (PubMed:9501222). It can also catalyze the epoxidation of double bonds of polyunsaturated fatty acids such as (14S)-hydroperoxy-docosahexaenoate/(14S)-HPDHA resulting in the formation of (13S,14S)-epoxy-DHA. Furthermore, it may participate in the sequential oxidations of DHA ((4Z,7Z,10Z,13Z,16Z,19Z)-docosahexaenoate) to generate specialized pro-resolving mediators (SPMs) like resolvin D5 ((7S,17S)-diHPDHA) and (7S,14S)-diHPDHA, that actively down-regulate the immune response and have anti-aggregation properties with platelets (By similarity). An additional function involves a multistep process by which it transforms leukotriene A4/LTA4 into the bioactive lipids lipoxin A4/LXA4 and lipoxin B4/LXB4, both are vasoactive and LXA4 may regulate neutrophil function via occupancy of specific recognition sites (By similarity). Can also peroxidize linoleate ((9Z,12Z)-octadecadienoate) to (13S)-hydroperoxyoctadecadienoate/ (13S-HPODE) (PubMed:11256953). Due to its role in regulating both the expression of the vascular endothelial growth factor (VEGF, an angiogenic factor involved in the survival and metastasis of solid tumors) and the expression of integrin beta-1 (known to affect tumor cell migration and proliferation), it can be regarded as protumorigenic. Important for cell survival, as it may play a role not only in proliferation but also in the prevention of apoptosis in vascular smooth muscle cells (By similarity).</text>
</comment>
<comment type="catalytic activity">
    <reaction evidence="7 10">
        <text>(5Z,8Z,11Z,14Z)-eicosatetraenoate + O2 = (12S)-hydroperoxy-(5Z,8Z,10E,14Z)-eicosatetraenoate</text>
        <dbReference type="Rhea" id="RHEA:10428"/>
        <dbReference type="ChEBI" id="CHEBI:15379"/>
        <dbReference type="ChEBI" id="CHEBI:32395"/>
        <dbReference type="ChEBI" id="CHEBI:57444"/>
        <dbReference type="EC" id="1.13.11.31"/>
    </reaction>
    <physiologicalReaction direction="left-to-right" evidence="10">
        <dbReference type="Rhea" id="RHEA:10429"/>
    </physiologicalReaction>
</comment>
<comment type="catalytic activity">
    <reaction>
        <text>(9Z,12Z)-octadecadienoate + O2 = (13S)-hydroperoxy-(9Z,11E)-octadecadienoate</text>
        <dbReference type="Rhea" id="RHEA:22780"/>
        <dbReference type="ChEBI" id="CHEBI:15379"/>
        <dbReference type="ChEBI" id="CHEBI:30245"/>
        <dbReference type="ChEBI" id="CHEBI:57466"/>
    </reaction>
    <physiologicalReaction direction="left-to-right" evidence="13">
        <dbReference type="Rhea" id="RHEA:22781"/>
    </physiologicalReaction>
</comment>
<comment type="catalytic activity">
    <reaction evidence="3">
        <text>2 leukotriene A4 + O2 + 2 H2O = 2 lipoxin A4</text>
        <dbReference type="Rhea" id="RHEA:48584"/>
        <dbReference type="ChEBI" id="CHEBI:15377"/>
        <dbReference type="ChEBI" id="CHEBI:15379"/>
        <dbReference type="ChEBI" id="CHEBI:57463"/>
        <dbReference type="ChEBI" id="CHEBI:67026"/>
    </reaction>
</comment>
<comment type="catalytic activity">
    <reaction evidence="3">
        <text>2 leukotriene A4 + O2 + 2 H2O = 2 lipoxin B4</text>
        <dbReference type="Rhea" id="RHEA:48588"/>
        <dbReference type="ChEBI" id="CHEBI:15377"/>
        <dbReference type="ChEBI" id="CHEBI:15379"/>
        <dbReference type="ChEBI" id="CHEBI:57463"/>
        <dbReference type="ChEBI" id="CHEBI:67031"/>
    </reaction>
</comment>
<comment type="catalytic activity">
    <reaction evidence="7">
        <text>(5Z,8Z,11Z)-eicosatrienoate + O2 = (12S)-hydroperoxy-(5Z,8Z,10E)-eicosatrienoate</text>
        <dbReference type="Rhea" id="RHEA:41324"/>
        <dbReference type="ChEBI" id="CHEBI:15379"/>
        <dbReference type="ChEBI" id="CHEBI:78043"/>
        <dbReference type="ChEBI" id="CHEBI:78046"/>
    </reaction>
    <physiologicalReaction direction="left-to-right" evidence="13">
        <dbReference type="Rhea" id="RHEA:41325"/>
    </physiologicalReaction>
</comment>
<comment type="catalytic activity">
    <reaction evidence="7">
        <text>(8Z,11Z,14Z)-eicosatrienoate + O2 = (12S)-hydroperoxy-(8Z,10E,14Z)-eicosatrienoate</text>
        <dbReference type="Rhea" id="RHEA:41328"/>
        <dbReference type="ChEBI" id="CHEBI:15379"/>
        <dbReference type="ChEBI" id="CHEBI:71589"/>
        <dbReference type="ChEBI" id="CHEBI:78047"/>
    </reaction>
    <physiologicalReaction direction="left-to-right" evidence="13">
        <dbReference type="Rhea" id="RHEA:41329"/>
    </physiologicalReaction>
</comment>
<comment type="catalytic activity">
    <reaction evidence="7">
        <text>(4Z,7Z,10Z,13Z,16Z,19Z)-docosahexaenoate + O2 = (14S)-hydroperoxy-(4Z,7Z,10Z,12E,16Z,19Z)-docosahexaenoate</text>
        <dbReference type="Rhea" id="RHEA:41332"/>
        <dbReference type="ChEBI" id="CHEBI:15379"/>
        <dbReference type="ChEBI" id="CHEBI:77016"/>
        <dbReference type="ChEBI" id="CHEBI:78048"/>
    </reaction>
    <physiologicalReaction direction="left-to-right" evidence="13">
        <dbReference type="Rhea" id="RHEA:41333"/>
    </physiologicalReaction>
</comment>
<comment type="catalytic activity">
    <reaction evidence="3">
        <text>(7S)-hydroperoxy-(4Z,8E,10Z,13Z,16Z,19Z)-docosahexaenoate + O2 = (7S,14S)-dihydroperoxy-(4Z,8E,10Z,12E,16Z,19Z)-docosahexaenoate</text>
        <dbReference type="Rhea" id="RHEA:64724"/>
        <dbReference type="ChEBI" id="CHEBI:15379"/>
        <dbReference type="ChEBI" id="CHEBI:156049"/>
        <dbReference type="ChEBI" id="CHEBI:156082"/>
    </reaction>
    <physiologicalReaction direction="left-to-right" evidence="3">
        <dbReference type="Rhea" id="RHEA:64725"/>
    </physiologicalReaction>
</comment>
<comment type="catalytic activity">
    <reaction evidence="3">
        <text>(7S)-hydroperoxy-(4Z,8E,10Z,13Z,16Z,19Z)-docosahexaenoate + O2 = (7S,17S)-dihydroperoxy-(4Z,8E,10Z,13Z,15E,19Z)-docosahexaenoate</text>
        <dbReference type="Rhea" id="RHEA:64728"/>
        <dbReference type="ChEBI" id="CHEBI:15379"/>
        <dbReference type="ChEBI" id="CHEBI:140349"/>
        <dbReference type="ChEBI" id="CHEBI:156049"/>
    </reaction>
    <physiologicalReaction direction="left-to-right" evidence="3">
        <dbReference type="Rhea" id="RHEA:64729"/>
    </physiologicalReaction>
</comment>
<comment type="catalytic activity">
    <reaction evidence="8">
        <text>(14R,15S)-epoxy-(5Z,8Z,11Z)-eicosatrienoate + O2 = (12S)-hydroperoxy-(14R,15S)-epoxy-(5Z,8Z,10E)-eicosatrienoate</text>
        <dbReference type="Rhea" id="RHEA:50276"/>
        <dbReference type="ChEBI" id="CHEBI:15379"/>
        <dbReference type="ChEBI" id="CHEBI:131965"/>
        <dbReference type="ChEBI" id="CHEBI:132063"/>
    </reaction>
    <physiologicalReaction direction="left-to-right" evidence="14">
        <dbReference type="Rhea" id="RHEA:50277"/>
    </physiologicalReaction>
</comment>
<comment type="catalytic activity">
    <reaction evidence="8">
        <text>(14S,15R)-epoxy-(5Z,8Z,11Z)-eicosatrienoate + O2 = (12S)-hydroperoxy-(14S,15R)-epoxy-(5Z,8Z,10E)-eicosatrienoate</text>
        <dbReference type="Rhea" id="RHEA:50284"/>
        <dbReference type="ChEBI" id="CHEBI:15379"/>
        <dbReference type="ChEBI" id="CHEBI:131964"/>
        <dbReference type="ChEBI" id="CHEBI:132065"/>
    </reaction>
    <physiologicalReaction direction="left-to-right" evidence="14">
        <dbReference type="Rhea" id="RHEA:50285"/>
    </physiologicalReaction>
</comment>
<comment type="catalytic activity">
    <reaction evidence="3">
        <text>(5Z,8Z,11Z,14Z)-eicosatetraenoate + O2 = (15S)-hydroperoxy-(5Z,8Z,11Z,13E)-eicosatetraenoate</text>
        <dbReference type="Rhea" id="RHEA:16869"/>
        <dbReference type="ChEBI" id="CHEBI:15379"/>
        <dbReference type="ChEBI" id="CHEBI:32395"/>
        <dbReference type="ChEBI" id="CHEBI:57446"/>
        <dbReference type="EC" id="1.13.11.33"/>
    </reaction>
    <physiologicalReaction direction="left-to-right" evidence="3">
        <dbReference type="Rhea" id="RHEA:16870"/>
    </physiologicalReaction>
</comment>
<comment type="catalytic activity">
    <reaction evidence="3">
        <text>(14S)-hydroperoxy-(4Z,7Z,10Z,12E,16Z,19Z)-docosahexaenoate = (13S,14S)-epoxy-(4Z,7Z,9E,11E,16Z,19Z)-docosahexaenoate + H2O</text>
        <dbReference type="Rhea" id="RHEA:53532"/>
        <dbReference type="ChEBI" id="CHEBI:15377"/>
        <dbReference type="ChEBI" id="CHEBI:78048"/>
        <dbReference type="ChEBI" id="CHEBI:131958"/>
    </reaction>
    <physiologicalReaction direction="left-to-right" evidence="3">
        <dbReference type="Rhea" id="RHEA:53533"/>
    </physiologicalReaction>
</comment>
<comment type="catalytic activity">
    <reaction evidence="3">
        <text>N-(5Z,8Z,11Z,14Z)-eicosatetraenoyl-L-alanine + O2 = N-(15S)-hydroperoxy-(5Z,8Z,11Z,13E)-eicosatetraenoyl-alanine</text>
        <dbReference type="Rhea" id="RHEA:50184"/>
        <dbReference type="ChEBI" id="CHEBI:15379"/>
        <dbReference type="ChEBI" id="CHEBI:132071"/>
        <dbReference type="ChEBI" id="CHEBI:132077"/>
    </reaction>
    <physiologicalReaction direction="left-to-right" evidence="3">
        <dbReference type="Rhea" id="RHEA:50185"/>
    </physiologicalReaction>
</comment>
<comment type="catalytic activity">
    <reaction evidence="3">
        <text>N-(5Z,8Z,11Z,14Z)-eicosatetraenoyl-L-alanine + O2 = N-(12S)-hydroperoxy-(5Z,8Z,10E,14Z)-eicosatetraenoyl-alanine</text>
        <dbReference type="Rhea" id="RHEA:50172"/>
        <dbReference type="ChEBI" id="CHEBI:15379"/>
        <dbReference type="ChEBI" id="CHEBI:132071"/>
        <dbReference type="ChEBI" id="CHEBI:132074"/>
    </reaction>
    <physiologicalReaction direction="left-to-right" evidence="3">
        <dbReference type="Rhea" id="RHEA:50173"/>
    </physiologicalReaction>
</comment>
<comment type="catalytic activity">
    <reaction evidence="3">
        <text>N-(5Z,8Z,11Z,14Z)-eicosatetraenoyl-gamma-aminobutanoate + O2 = N-(15S)-hydroperoxy-(5Z,8Z,11Z,13E)-eicosatetraenoyl-gamma-aminobutanoate</text>
        <dbReference type="Rhea" id="RHEA:50180"/>
        <dbReference type="ChEBI" id="CHEBI:15379"/>
        <dbReference type="ChEBI" id="CHEBI:132072"/>
        <dbReference type="ChEBI" id="CHEBI:132078"/>
    </reaction>
    <physiologicalReaction direction="left-to-right" evidence="3">
        <dbReference type="Rhea" id="RHEA:50181"/>
    </physiologicalReaction>
</comment>
<comment type="catalytic activity">
    <reaction evidence="3">
        <text>N-(5Z,8Z,11Z,14Z)-eicosatetraenoyl-gamma-aminobutanoate + O2 = N-(12S)-hydroperoxy-(5Z,8Z,10E,14Z)-eicosatetraenoyl-gamma-aminobutanoate</text>
        <dbReference type="Rhea" id="RHEA:50176"/>
        <dbReference type="ChEBI" id="CHEBI:15379"/>
        <dbReference type="ChEBI" id="CHEBI:132072"/>
        <dbReference type="ChEBI" id="CHEBI:132075"/>
    </reaction>
    <physiologicalReaction direction="left-to-right" evidence="3">
        <dbReference type="Rhea" id="RHEA:50177"/>
    </physiologicalReaction>
</comment>
<comment type="catalytic activity">
    <reaction evidence="3">
        <text>N-(5Z,8Z,11Z,14Z)-eicosatetraenoyl-glycine + O2 = N-(15S)-hydroperoxy-(5Z,8Z,11Z,13E)-eicosatetraenoyl-glycine</text>
        <dbReference type="Rhea" id="RHEA:50188"/>
        <dbReference type="ChEBI" id="CHEBI:15379"/>
        <dbReference type="ChEBI" id="CHEBI:59002"/>
        <dbReference type="ChEBI" id="CHEBI:132076"/>
    </reaction>
    <physiologicalReaction direction="left-to-right" evidence="3">
        <dbReference type="Rhea" id="RHEA:50189"/>
    </physiologicalReaction>
</comment>
<comment type="catalytic activity">
    <reaction evidence="3">
        <text>N-(5Z,8Z,11Z,14Z)-eicosatetraenoyl-glycine + O2 = N-(12S)-hydroperoxy-(5Z,8Z,10E,14Z)-eicosatetraenoyl-glycine</text>
        <dbReference type="Rhea" id="RHEA:50168"/>
        <dbReference type="ChEBI" id="CHEBI:15379"/>
        <dbReference type="ChEBI" id="CHEBI:59002"/>
        <dbReference type="ChEBI" id="CHEBI:132073"/>
    </reaction>
    <physiologicalReaction direction="left-to-right" evidence="3">
        <dbReference type="Rhea" id="RHEA:50169"/>
    </physiologicalReaction>
</comment>
<comment type="catalytic activity">
    <reaction evidence="3">
        <text>N-(5Z,8Z,11Z,14Z)-eicosatetraenoyl-taurine + O2 = N-(12S)-hydroperoxy-(5Z,8Z,10E,14Z)-eicosatetraenoyl-taurine</text>
        <dbReference type="Rhea" id="RHEA:50160"/>
        <dbReference type="ChEBI" id="CHEBI:15379"/>
        <dbReference type="ChEBI" id="CHEBI:132060"/>
        <dbReference type="ChEBI" id="CHEBI:132061"/>
    </reaction>
    <physiologicalReaction direction="left-to-right" evidence="3">
        <dbReference type="Rhea" id="RHEA:50161"/>
    </physiologicalReaction>
</comment>
<comment type="catalytic activity">
    <reaction evidence="3">
        <text>N-(5Z,8Z,11Z,14Z)-eicosatetraenoyl-taurine + O2 = N-(15S)-hydroperoxy-(5Z,8Z,11Z,13E)-eicosatetraenoyl-taurine</text>
        <dbReference type="Rhea" id="RHEA:50156"/>
        <dbReference type="ChEBI" id="CHEBI:15379"/>
        <dbReference type="ChEBI" id="CHEBI:132060"/>
        <dbReference type="ChEBI" id="CHEBI:132062"/>
    </reaction>
    <physiologicalReaction direction="left-to-right" evidence="3">
        <dbReference type="Rhea" id="RHEA:50157"/>
    </physiologicalReaction>
</comment>
<comment type="catalytic activity">
    <reaction evidence="3">
        <text>(5Z,8Z,11Z,14Z,17Z)-eicosapentaenoate + O2 = (12S)-hydroperoxy-(5Z,8Z,10E,14Z,17Z)-eicosapentaenoate</text>
        <dbReference type="Rhea" id="RHEA:48704"/>
        <dbReference type="ChEBI" id="CHEBI:15379"/>
        <dbReference type="ChEBI" id="CHEBI:58562"/>
        <dbReference type="ChEBI" id="CHEBI:90772"/>
    </reaction>
    <physiologicalReaction direction="left-to-right" evidence="3">
        <dbReference type="Rhea" id="RHEA:48705"/>
    </physiologicalReaction>
</comment>
<comment type="cofactor">
    <cofactor>
        <name>Fe cation</name>
        <dbReference type="ChEBI" id="CHEBI:24875"/>
    </cofactor>
    <text>Binds 1 Fe cation per subunit.</text>
</comment>
<comment type="activity regulation">
    <text evidence="3 7">Activated by EGF. Arachidonic acid conversion is inhibited by (13S,14S)-epoxy-(4Z,7Z,9E,11E,16Z,19Z)-docosahexaenoate (13S,14S-epoxy-DHA) (By similarity). Arachidonate 12-lipoxygenase activity is decreased when PH decreases from 7.4 to 6 (PubMed:11256953).</text>
</comment>
<comment type="pathway">
    <text>Lipid metabolism; hydroperoxy eicosatetraenoic acid biosynthesis.</text>
</comment>
<comment type="subcellular location">
    <subcellularLocation>
        <location evidence="9">Cytoplasm</location>
        <location evidence="9">Cytosol</location>
    </subcellularLocation>
    <subcellularLocation>
        <location evidence="1">Membrane</location>
    </subcellularLocation>
    <text evidence="1">Membrane association is stimulated by EGF.</text>
</comment>
<comment type="tissue specificity">
    <text evidence="6 10 11">Found primarily in platelets and in microsomal and cytosolic fractions of the epidermis (at protein level).</text>
</comment>
<comment type="disruption phenotype">
    <text evidence="6 11">Mice are fertile and appear to exhibit no gross abnormalities. However, they display increased aggregation of platelets in response to ADP. They also display a mild basal transepidermal water loss.</text>
</comment>
<comment type="similarity">
    <text evidence="12">Belongs to the lipoxygenase family.</text>
</comment>
<reference key="1">
    <citation type="journal article" date="1994" name="J. Biol. Chem.">
        <title>cDNA cloning, expression, mutagenesis of C-terminal isoleucine, genomic structure, and chromosomal localizations of murine 12-lipoxygenases.</title>
        <authorList>
            <person name="Chen X.-S."/>
            <person name="Kurre U."/>
            <person name="Jenkins N.A."/>
            <person name="Copeland N.G."/>
            <person name="Funk C.D."/>
        </authorList>
    </citation>
    <scope>NUCLEOTIDE SEQUENCE [MRNA]</scope>
    <scope>CATALYTIC ACTIVITY</scope>
    <scope>MUTAGENESIS OF ILE-663</scope>
    <scope>TISSUE SPECIFICITY</scope>
    <scope>FUNCTION</scope>
    <source>
        <strain>C57BL/6J</strain>
        <strain>ICR</strain>
        <tissue>Spleen</tissue>
    </source>
</reference>
<reference key="2">
    <citation type="journal article" date="1995" name="Mol. Carcinog.">
        <title>12-lipoxygenase isoenzymes in mouse skin tumor development.</title>
        <authorList>
            <person name="Krieg P."/>
            <person name="Kinzig A."/>
            <person name="Ress-Loschke M."/>
            <person name="Vogel S."/>
            <person name="Vanlandingham B."/>
            <person name="Stephan M."/>
            <person name="Lehmann W.D."/>
            <person name="Marks F."/>
            <person name="Furstenberger G."/>
        </authorList>
    </citation>
    <scope>NUCLEOTIDE SEQUENCE [MRNA]</scope>
</reference>
<reference key="3">
    <citation type="journal article" date="2005" name="Science">
        <title>The transcriptional landscape of the mammalian genome.</title>
        <authorList>
            <person name="Carninci P."/>
            <person name="Kasukawa T."/>
            <person name="Katayama S."/>
            <person name="Gough J."/>
            <person name="Frith M.C."/>
            <person name="Maeda N."/>
            <person name="Oyama R."/>
            <person name="Ravasi T."/>
            <person name="Lenhard B."/>
            <person name="Wells C."/>
            <person name="Kodzius R."/>
            <person name="Shimokawa K."/>
            <person name="Bajic V.B."/>
            <person name="Brenner S.E."/>
            <person name="Batalov S."/>
            <person name="Forrest A.R."/>
            <person name="Zavolan M."/>
            <person name="Davis M.J."/>
            <person name="Wilming L.G."/>
            <person name="Aidinis V."/>
            <person name="Allen J.E."/>
            <person name="Ambesi-Impiombato A."/>
            <person name="Apweiler R."/>
            <person name="Aturaliya R.N."/>
            <person name="Bailey T.L."/>
            <person name="Bansal M."/>
            <person name="Baxter L."/>
            <person name="Beisel K.W."/>
            <person name="Bersano T."/>
            <person name="Bono H."/>
            <person name="Chalk A.M."/>
            <person name="Chiu K.P."/>
            <person name="Choudhary V."/>
            <person name="Christoffels A."/>
            <person name="Clutterbuck D.R."/>
            <person name="Crowe M.L."/>
            <person name="Dalla E."/>
            <person name="Dalrymple B.P."/>
            <person name="de Bono B."/>
            <person name="Della Gatta G."/>
            <person name="di Bernardo D."/>
            <person name="Down T."/>
            <person name="Engstrom P."/>
            <person name="Fagiolini M."/>
            <person name="Faulkner G."/>
            <person name="Fletcher C.F."/>
            <person name="Fukushima T."/>
            <person name="Furuno M."/>
            <person name="Futaki S."/>
            <person name="Gariboldi M."/>
            <person name="Georgii-Hemming P."/>
            <person name="Gingeras T.R."/>
            <person name="Gojobori T."/>
            <person name="Green R.E."/>
            <person name="Gustincich S."/>
            <person name="Harbers M."/>
            <person name="Hayashi Y."/>
            <person name="Hensch T.K."/>
            <person name="Hirokawa N."/>
            <person name="Hill D."/>
            <person name="Huminiecki L."/>
            <person name="Iacono M."/>
            <person name="Ikeo K."/>
            <person name="Iwama A."/>
            <person name="Ishikawa T."/>
            <person name="Jakt M."/>
            <person name="Kanapin A."/>
            <person name="Katoh M."/>
            <person name="Kawasawa Y."/>
            <person name="Kelso J."/>
            <person name="Kitamura H."/>
            <person name="Kitano H."/>
            <person name="Kollias G."/>
            <person name="Krishnan S.P."/>
            <person name="Kruger A."/>
            <person name="Kummerfeld S.K."/>
            <person name="Kurochkin I.V."/>
            <person name="Lareau L.F."/>
            <person name="Lazarevic D."/>
            <person name="Lipovich L."/>
            <person name="Liu J."/>
            <person name="Liuni S."/>
            <person name="McWilliam S."/>
            <person name="Madan Babu M."/>
            <person name="Madera M."/>
            <person name="Marchionni L."/>
            <person name="Matsuda H."/>
            <person name="Matsuzawa S."/>
            <person name="Miki H."/>
            <person name="Mignone F."/>
            <person name="Miyake S."/>
            <person name="Morris K."/>
            <person name="Mottagui-Tabar S."/>
            <person name="Mulder N."/>
            <person name="Nakano N."/>
            <person name="Nakauchi H."/>
            <person name="Ng P."/>
            <person name="Nilsson R."/>
            <person name="Nishiguchi S."/>
            <person name="Nishikawa S."/>
            <person name="Nori F."/>
            <person name="Ohara O."/>
            <person name="Okazaki Y."/>
            <person name="Orlando V."/>
            <person name="Pang K.C."/>
            <person name="Pavan W.J."/>
            <person name="Pavesi G."/>
            <person name="Pesole G."/>
            <person name="Petrovsky N."/>
            <person name="Piazza S."/>
            <person name="Reed J."/>
            <person name="Reid J.F."/>
            <person name="Ring B.Z."/>
            <person name="Ringwald M."/>
            <person name="Rost B."/>
            <person name="Ruan Y."/>
            <person name="Salzberg S.L."/>
            <person name="Sandelin A."/>
            <person name="Schneider C."/>
            <person name="Schoenbach C."/>
            <person name="Sekiguchi K."/>
            <person name="Semple C.A."/>
            <person name="Seno S."/>
            <person name="Sessa L."/>
            <person name="Sheng Y."/>
            <person name="Shibata Y."/>
            <person name="Shimada H."/>
            <person name="Shimada K."/>
            <person name="Silva D."/>
            <person name="Sinclair B."/>
            <person name="Sperling S."/>
            <person name="Stupka E."/>
            <person name="Sugiura K."/>
            <person name="Sultana R."/>
            <person name="Takenaka Y."/>
            <person name="Taki K."/>
            <person name="Tammoja K."/>
            <person name="Tan S.L."/>
            <person name="Tang S."/>
            <person name="Taylor M.S."/>
            <person name="Tegner J."/>
            <person name="Teichmann S.A."/>
            <person name="Ueda H.R."/>
            <person name="van Nimwegen E."/>
            <person name="Verardo R."/>
            <person name="Wei C.L."/>
            <person name="Yagi K."/>
            <person name="Yamanishi H."/>
            <person name="Zabarovsky E."/>
            <person name="Zhu S."/>
            <person name="Zimmer A."/>
            <person name="Hide W."/>
            <person name="Bult C."/>
            <person name="Grimmond S.M."/>
            <person name="Teasdale R.D."/>
            <person name="Liu E.T."/>
            <person name="Brusic V."/>
            <person name="Quackenbush J."/>
            <person name="Wahlestedt C."/>
            <person name="Mattick J.S."/>
            <person name="Hume D.A."/>
            <person name="Kai C."/>
            <person name="Sasaki D."/>
            <person name="Tomaru Y."/>
            <person name="Fukuda S."/>
            <person name="Kanamori-Katayama M."/>
            <person name="Suzuki M."/>
            <person name="Aoki J."/>
            <person name="Arakawa T."/>
            <person name="Iida J."/>
            <person name="Imamura K."/>
            <person name="Itoh M."/>
            <person name="Kato T."/>
            <person name="Kawaji H."/>
            <person name="Kawagashira N."/>
            <person name="Kawashima T."/>
            <person name="Kojima M."/>
            <person name="Kondo S."/>
            <person name="Konno H."/>
            <person name="Nakano K."/>
            <person name="Ninomiya N."/>
            <person name="Nishio T."/>
            <person name="Okada M."/>
            <person name="Plessy C."/>
            <person name="Shibata K."/>
            <person name="Shiraki T."/>
            <person name="Suzuki S."/>
            <person name="Tagami M."/>
            <person name="Waki K."/>
            <person name="Watahiki A."/>
            <person name="Okamura-Oho Y."/>
            <person name="Suzuki H."/>
            <person name="Kawai J."/>
            <person name="Hayashizaki Y."/>
        </authorList>
    </citation>
    <scope>NUCLEOTIDE SEQUENCE [LARGE SCALE MRNA]</scope>
    <source>
        <strain>C57BL/6J</strain>
        <tissue>Ovary</tissue>
        <tissue>Vagina</tissue>
    </source>
</reference>
<reference key="4">
    <citation type="journal article" date="2009" name="PLoS Biol.">
        <title>Lineage-specific biology revealed by a finished genome assembly of the mouse.</title>
        <authorList>
            <person name="Church D.M."/>
            <person name="Goodstadt L."/>
            <person name="Hillier L.W."/>
            <person name="Zody M.C."/>
            <person name="Goldstein S."/>
            <person name="She X."/>
            <person name="Bult C.J."/>
            <person name="Agarwala R."/>
            <person name="Cherry J.L."/>
            <person name="DiCuccio M."/>
            <person name="Hlavina W."/>
            <person name="Kapustin Y."/>
            <person name="Meric P."/>
            <person name="Maglott D."/>
            <person name="Birtle Z."/>
            <person name="Marques A.C."/>
            <person name="Graves T."/>
            <person name="Zhou S."/>
            <person name="Teague B."/>
            <person name="Potamousis K."/>
            <person name="Churas C."/>
            <person name="Place M."/>
            <person name="Herschleb J."/>
            <person name="Runnheim R."/>
            <person name="Forrest D."/>
            <person name="Amos-Landgraf J."/>
            <person name="Schwartz D.C."/>
            <person name="Cheng Z."/>
            <person name="Lindblad-Toh K."/>
            <person name="Eichler E.E."/>
            <person name="Ponting C.P."/>
        </authorList>
    </citation>
    <scope>NUCLEOTIDE SEQUENCE [LARGE SCALE GENOMIC DNA]</scope>
    <source>
        <strain>C57BL/6J</strain>
    </source>
</reference>
<reference key="5">
    <citation type="journal article" date="1995" name="Prostaglandins">
        <title>12-lipoxygenase in Lewis lung carcinoma cells: molecular identity, intracellular distribution of activity and protein, and Ca(2+)-dependent translocation from cytosol to membranes.</title>
        <authorList>
            <person name="Hagmann W."/>
            <person name="Gao X."/>
            <person name="Zacharek A."/>
            <person name="Wojciechowski L.A."/>
            <person name="Honn K.V."/>
        </authorList>
    </citation>
    <scope>NUCLEOTIDE SEQUENCE [MRNA] OF 126-218</scope>
    <source>
        <tissue>Lung</tissue>
    </source>
</reference>
<reference key="6">
    <citation type="journal article" date="1995" name="J. Histochem. Cytochem.">
        <title>Immunocytochemical localization of platelet-type arachidonate 12-lipoxygenase in mouse blood cells.</title>
        <authorList>
            <person name="Nakamura M."/>
            <person name="Ueda N."/>
            <person name="Kishimoto K."/>
            <person name="Yoshimoto T."/>
            <person name="Yamamoto S."/>
            <person name="Ishimura K."/>
        </authorList>
    </citation>
    <scope>SUBCELLULAR LOCATION</scope>
</reference>
<reference key="7">
    <citation type="journal article" date="1998" name="Proc. Natl. Acad. Sci. U.S.A.">
        <title>Increased platelet sensitivity to ADP in mice lacking platelet-type 12-lipoxygenase.</title>
        <authorList>
            <person name="Johnson E.N."/>
            <person name="Brass L.F."/>
            <person name="Funk C.D."/>
        </authorList>
    </citation>
    <scope>FUNCTION IN PLATELET ACTIVATION</scope>
    <scope>DISRUPTION PHENOTYPE</scope>
    <scope>TISSUE SPECIFICITY</scope>
</reference>
<reference key="8">
    <citation type="journal article" date="1999" name="J. Invest. Dermatol.">
        <title>Basal transepidermal water loss is increased in platelet-type 12-lipoxygenase deficient mice.</title>
        <authorList>
            <person name="Johnson E.N."/>
            <person name="Nanney L.B."/>
            <person name="Virmani J."/>
            <person name="Lawson J.A."/>
            <person name="Funk C.D."/>
        </authorList>
    </citation>
    <scope>DISRUPTION PHENOTYPE</scope>
    <scope>TISSUE SPECIFICITY</scope>
</reference>
<reference key="9">
    <citation type="journal article" date="2001" name="Biochem. J.">
        <title>Enzymic characterization of epidermis-derived 12-lipoxygenase isoenzymes.</title>
        <authorList>
            <person name="Siebert M."/>
            <person name="Krieg P."/>
            <person name="Lehmann W.D."/>
            <person name="Marks F."/>
            <person name="Fuerstenberger G."/>
        </authorList>
    </citation>
    <scope>CATALYTIC ACTIVITY</scope>
    <scope>FUNCTION</scope>
    <scope>ACTIVITY REGULATION</scope>
</reference>
<reference key="10">
    <citation type="journal article" date="2010" name="Cell">
        <title>A tissue-specific atlas of mouse protein phosphorylation and expression.</title>
        <authorList>
            <person name="Huttlin E.L."/>
            <person name="Jedrychowski M.P."/>
            <person name="Elias J.E."/>
            <person name="Goswami T."/>
            <person name="Rad R."/>
            <person name="Beausoleil S.A."/>
            <person name="Villen J."/>
            <person name="Haas W."/>
            <person name="Sowa M.E."/>
            <person name="Gygi S.P."/>
        </authorList>
    </citation>
    <scope>IDENTIFICATION BY MASS SPECTROMETRY [LARGE SCALE ANALYSIS]</scope>
    <source>
        <tissue>Lung</tissue>
        <tissue>Spleen</tissue>
    </source>
</reference>
<reference key="11">
    <citation type="journal article" date="2014" name="J. Lipid Res.">
        <title>Lipoxygenase-catalyzed transformation of epoxy fatty acids to hydroxy-endoperoxides: a potential P450 and lipoxygenase interaction.</title>
        <authorList>
            <person name="Teder T."/>
            <person name="Boeglin W.E."/>
            <person name="Brash A.R."/>
        </authorList>
    </citation>
    <scope>CATALYTIC ACTIVITY</scope>
    <scope>FUNCTION</scope>
</reference>
<protein>
    <recommendedName>
        <fullName evidence="3">Polyunsaturated fatty acid lipoxygenase ALOX12</fullName>
        <ecNumber evidence="3">1.13.11.-</ecNumber>
    </recommendedName>
    <alternativeName>
        <fullName evidence="13">Arachidonate (12S)-lipoxygenase</fullName>
        <shortName>12S-LOX</shortName>
        <shortName evidence="3">12S-lipoxygenase</shortName>
        <ecNumber evidence="7 10">1.13.11.31</ecNumber>
    </alternativeName>
    <alternativeName>
        <fullName evidence="3">Arachidonate (15S)-lipoxygenase</fullName>
        <ecNumber evidence="3">1.13.11.33</ecNumber>
    </alternativeName>
    <alternativeName>
        <fullName evidence="13">Linoleate (13S)-lipoxygenase</fullName>
    </alternativeName>
    <alternativeName>
        <fullName>Lipoxin synthase 12-LO</fullName>
        <ecNumber>3.3.2.-</ecNumber>
    </alternativeName>
    <alternativeName>
        <fullName>Platelet-type lipoxygenase 12</fullName>
        <shortName>P-12LO</shortName>
    </alternativeName>
</protein>
<accession>P39655</accession>
<accession>Q8BHG4</accession>
<sequence length="663" mass="75390">MGRYRVRVVTGAWLFSGSLNLVRLWLVGEHREAKLELQLRPARGKEEEFDFDVPEDLGPLQFVKLHKQHTVVDDAWFCNLITVQGPGTSAEAVFPCYRWVQGEGILSLPEGTARLAGDNALDVFQKYREKELKERQQTYCWATWKEGLPQTIAADCKDDLPPNMRFHEEKRLDFEWTLKAGVLEMGLKRVYTLLRSWNHLEDFDQIFWGQKSALAEKVHQCWQEDELFGYQFLNGANPMLLRRSTSLPSRLVLPSGMEELQAQLEKELKNGSLFEADFILLDGIPANVIRGEPQYLAAPLVMLRMDPGGKLLPMAIQIQPPNPSSPAPTLFLPSDPPLAWLLAKIWVRNSDFQLQELQFHLLNTHLVAEVIAVATMRCLPGLHPIFKLLVPHIRYTMEINTRSRTQLISDGGIFDQVVSTGGGGHVQLLTRAVAQLTYHSLCPPDDLANRGLLRIPSALYARDALQLWEVTARYVKGMVHLFYQSDDIVRGDPELQAWCREITEVGLCHAQDRGFPVSFQSRAQLCHFLTMCVFTCTAQHAAINQGQLDWYGWVPNAPCTMRMPPPTSKDDVTMETVMGSLPDVQKACLQMTITWHLGRLQPDMVPLGHHTEKYFSDPRTKAVLSQFQADLDNLEKEITARNEQLDLPYEYLKPSRIENSITI</sequence>
<feature type="chain" id="PRO_0000220683" description="Polyunsaturated fatty acid lipoxygenase ALOX12">
    <location>
        <begin position="1"/>
        <end position="663"/>
    </location>
</feature>
<feature type="domain" description="PLAT" evidence="4">
    <location>
        <begin position="2"/>
        <end position="114"/>
    </location>
</feature>
<feature type="domain" description="Lipoxygenase" evidence="5">
    <location>
        <begin position="115"/>
        <end position="663"/>
    </location>
</feature>
<feature type="binding site" evidence="5">
    <location>
        <position position="360"/>
    </location>
    <ligand>
        <name>Fe cation</name>
        <dbReference type="ChEBI" id="CHEBI:24875"/>
        <note>catalytic</note>
    </ligand>
</feature>
<feature type="binding site" evidence="5">
    <location>
        <position position="365"/>
    </location>
    <ligand>
        <name>Fe cation</name>
        <dbReference type="ChEBI" id="CHEBI:24875"/>
        <note>catalytic</note>
    </ligand>
</feature>
<feature type="binding site" evidence="5">
    <location>
        <position position="540"/>
    </location>
    <ligand>
        <name>Fe cation</name>
        <dbReference type="ChEBI" id="CHEBI:24875"/>
        <note>catalytic</note>
    </ligand>
</feature>
<feature type="binding site" evidence="5">
    <location>
        <position position="544"/>
    </location>
    <ligand>
        <name>Fe cation</name>
        <dbReference type="ChEBI" id="CHEBI:24875"/>
        <note>catalytic</note>
    </ligand>
</feature>
<feature type="binding site" evidence="5">
    <location>
        <position position="663"/>
    </location>
    <ligand>
        <name>Fe cation</name>
        <dbReference type="ChEBI" id="CHEBI:24875"/>
        <note>catalytic</note>
    </ligand>
</feature>
<feature type="modified residue" description="Phosphoserine" evidence="2">
    <location>
        <position position="246"/>
    </location>
</feature>
<feature type="mutagenesis site" description="Loss of activity." evidence="10">
    <original>I</original>
    <variation>D</variation>
    <variation>R</variation>
    <variation>K</variation>
    <variation>G</variation>
    <location>
        <position position="663"/>
    </location>
</feature>
<feature type="mutagenesis site" description="Little activity (8-15%)." evidence="10">
    <original>I</original>
    <variation>S</variation>
    <variation>N</variation>
    <location>
        <position position="663"/>
    </location>
</feature>
<feature type="mutagenesis site" description="Nearly full activity." evidence="10">
    <original>I</original>
    <variation>V</variation>
    <location>
        <position position="663"/>
    </location>
</feature>
<feature type="sequence conflict" description="In Ref. 1; AAA20659." evidence="12" ref="1">
    <original>R</original>
    <variation>A</variation>
    <location>
        <position position="3"/>
    </location>
</feature>
<feature type="sequence conflict" description="In Ref. 1; AAA20659 and 2; AAB36013." evidence="12" ref="1 2">
    <original>T</original>
    <variation>Q</variation>
    <location>
        <position position="112"/>
    </location>
</feature>
<feature type="sequence conflict" description="In Ref. 1; AAA20659 and 2; AAB36013." evidence="12" ref="1 2">
    <original>S</original>
    <variation>T</variation>
    <location>
        <position position="403"/>
    </location>
</feature>
<proteinExistence type="evidence at protein level"/>
<evidence type="ECO:0000250" key="1"/>
<evidence type="ECO:0000250" key="2">
    <source>
        <dbReference type="UniProtKB" id="F1LQ70"/>
    </source>
</evidence>
<evidence type="ECO:0000250" key="3">
    <source>
        <dbReference type="UniProtKB" id="P18054"/>
    </source>
</evidence>
<evidence type="ECO:0000255" key="4">
    <source>
        <dbReference type="PROSITE-ProRule" id="PRU00152"/>
    </source>
</evidence>
<evidence type="ECO:0000255" key="5">
    <source>
        <dbReference type="PROSITE-ProRule" id="PRU00726"/>
    </source>
</evidence>
<evidence type="ECO:0000269" key="6">
    <source>
    </source>
</evidence>
<evidence type="ECO:0000269" key="7">
    <source>
    </source>
</evidence>
<evidence type="ECO:0000269" key="8">
    <source>
    </source>
</evidence>
<evidence type="ECO:0000269" key="9">
    <source>
    </source>
</evidence>
<evidence type="ECO:0000269" key="10">
    <source>
    </source>
</evidence>
<evidence type="ECO:0000269" key="11">
    <source>
    </source>
</evidence>
<evidence type="ECO:0000305" key="12"/>
<evidence type="ECO:0000305" key="13">
    <source>
    </source>
</evidence>
<evidence type="ECO:0000305" key="14">
    <source>
    </source>
</evidence>